<protein>
    <recommendedName>
        <fullName>Halorhodopsin</fullName>
        <shortName>HR</shortName>
    </recommendedName>
</protein>
<comment type="function">
    <text>Light-driven chloride pump.</text>
</comment>
<comment type="biophysicochemical properties">
    <absorption>
        <max>578 nm</max>
    </absorption>
</comment>
<comment type="subcellular location">
    <subcellularLocation>
        <location>Cell membrane</location>
        <topology>Multi-pass membrane protein</topology>
    </subcellularLocation>
</comment>
<comment type="similarity">
    <text evidence="2">Belongs to the archaeal/bacterial/fungal opsin family.</text>
</comment>
<evidence type="ECO:0000250" key="1"/>
<evidence type="ECO:0000305" key="2"/>
<keyword id="KW-1003">Cell membrane</keyword>
<keyword id="KW-0157">Chromophore</keyword>
<keyword id="KW-0406">Ion transport</keyword>
<keyword id="KW-0472">Membrane</keyword>
<keyword id="KW-0600">Photoreceptor protein</keyword>
<keyword id="KW-0675">Receptor</keyword>
<keyword id="KW-0681">Retinal protein</keyword>
<keyword id="KW-0716">Sensory transduction</keyword>
<keyword id="KW-0812">Transmembrane</keyword>
<keyword id="KW-1133">Transmembrane helix</keyword>
<keyword id="KW-0813">Transport</keyword>
<dbReference type="EMBL" id="D43766">
    <property type="protein sequence ID" value="BAA07823.1"/>
    <property type="molecule type" value="Genomic_DNA"/>
</dbReference>
<dbReference type="PIR" id="T48843">
    <property type="entry name" value="T48843"/>
</dbReference>
<dbReference type="SMR" id="Q48315"/>
<dbReference type="GO" id="GO:0005886">
    <property type="term" value="C:plasma membrane"/>
    <property type="evidence" value="ECO:0007669"/>
    <property type="project" value="UniProtKB-SubCell"/>
</dbReference>
<dbReference type="GO" id="GO:0005216">
    <property type="term" value="F:monoatomic ion channel activity"/>
    <property type="evidence" value="ECO:0007669"/>
    <property type="project" value="InterPro"/>
</dbReference>
<dbReference type="GO" id="GO:0009881">
    <property type="term" value="F:photoreceptor activity"/>
    <property type="evidence" value="ECO:0007669"/>
    <property type="project" value="UniProtKB-KW"/>
</dbReference>
<dbReference type="GO" id="GO:0007602">
    <property type="term" value="P:phototransduction"/>
    <property type="evidence" value="ECO:0007669"/>
    <property type="project" value="UniProtKB-KW"/>
</dbReference>
<dbReference type="CDD" id="cd15243">
    <property type="entry name" value="7tm_Halorhodopsin"/>
    <property type="match status" value="1"/>
</dbReference>
<dbReference type="Gene3D" id="1.20.1070.10">
    <property type="entry name" value="Rhodopsin 7-helix transmembrane proteins"/>
    <property type="match status" value="1"/>
</dbReference>
<dbReference type="InterPro" id="IPR001425">
    <property type="entry name" value="Arc/bac/fun_rhodopsins"/>
</dbReference>
<dbReference type="InterPro" id="IPR018229">
    <property type="entry name" value="Rhodopsin_retinal_BS"/>
</dbReference>
<dbReference type="PANTHER" id="PTHR28286">
    <property type="match status" value="1"/>
</dbReference>
<dbReference type="PANTHER" id="PTHR28286:SF2">
    <property type="entry name" value="BACTERIORHODOPSIN _OPSIN, NOPA (EUROFUNG)"/>
    <property type="match status" value="1"/>
</dbReference>
<dbReference type="Pfam" id="PF01036">
    <property type="entry name" value="Bac_rhodopsin"/>
    <property type="match status" value="1"/>
</dbReference>
<dbReference type="PRINTS" id="PR00251">
    <property type="entry name" value="BACTRLOPSIN"/>
</dbReference>
<dbReference type="SMART" id="SM01021">
    <property type="entry name" value="Bac_rhodopsin"/>
    <property type="match status" value="1"/>
</dbReference>
<dbReference type="SUPFAM" id="SSF81321">
    <property type="entry name" value="Family A G protein-coupled receptor-like"/>
    <property type="match status" value="1"/>
</dbReference>
<dbReference type="PROSITE" id="PS00950">
    <property type="entry name" value="BACTERIAL_OPSIN_1"/>
    <property type="match status" value="1"/>
</dbReference>
<dbReference type="PROSITE" id="PS00327">
    <property type="entry name" value="BACTERIAL_OPSIN_RET"/>
    <property type="match status" value="1"/>
</dbReference>
<proteinExistence type="evidence at protein level"/>
<organism>
    <name type="scientific">Halobacterium halobium (strain port)</name>
    <dbReference type="NCBI Taxonomy" id="33004"/>
    <lineage>
        <taxon>Archaea</taxon>
        <taxon>Methanobacteriati</taxon>
        <taxon>Methanobacteriota</taxon>
        <taxon>Stenosarchaea group</taxon>
        <taxon>Halobacteria</taxon>
        <taxon>Halobacteriales</taxon>
        <taxon>Halobacteriaceae</taxon>
        <taxon>Halobacterium</taxon>
    </lineage>
</organism>
<accession>Q48315</accession>
<reference key="1">
    <citation type="journal article" date="1995" name="Biochim. Biophys. Acta">
        <title>Over-expression of a new photo-active halorhodopsin in Halobacterium salinarium.</title>
        <authorList>
            <person name="Otomo J."/>
            <person name="Muramatsu T."/>
        </authorList>
    </citation>
    <scope>NUCLEOTIDE SEQUENCE [GENOMIC DNA]</scope>
</reference>
<sequence>MTAASTTATTMLQATQSDVLQEIQSNFLLNSSIWVNIALAGVVILLFVAMGRDIESPRAKLIWVATMLVPLVSISSYAGLASGLTVGFLQMPPGHALAGQEVLSPWGRYLTWTFSTPMILLALGLLADTDIASLFTAITMDIGMCVTGLAAALITSSHLLRWVFYGISCAFFVAVLYVLLVQWPADAEAAGTSEIFGTLKILTVVLWLGYPILWALGSEGVALLSVGVTSWGYSGLDILAKYVFAFLLLRWVAANEGAVSGSGMSIGSGGAAPADD</sequence>
<name>BACH_HALHP</name>
<gene>
    <name type="primary">hop</name>
</gene>
<feature type="propeptide" id="PRO_0000020240" evidence="1">
    <location>
        <begin position="1"/>
        <end position="21"/>
    </location>
</feature>
<feature type="chain" id="PRO_0000020241" description="Halorhodopsin">
    <location>
        <begin position="22"/>
        <end position="276"/>
    </location>
</feature>
<feature type="topological domain" description="Extracellular" evidence="1">
    <location>
        <begin position="22"/>
        <end position="25"/>
    </location>
</feature>
<feature type="transmembrane region" description="Helical; Name=Helix A" evidence="1">
    <location>
        <begin position="26"/>
        <end position="51"/>
    </location>
</feature>
<feature type="topological domain" description="Cytoplasmic" evidence="1">
    <location>
        <begin position="52"/>
        <end position="57"/>
    </location>
</feature>
<feature type="transmembrane region" description="Helical; Name=Helix B" evidence="1">
    <location>
        <begin position="58"/>
        <end position="81"/>
    </location>
</feature>
<feature type="topological domain" description="Extracellular" evidence="1">
    <location>
        <begin position="82"/>
        <end position="105"/>
    </location>
</feature>
<feature type="transmembrane region" description="Helical; Name=Helix C" evidence="1">
    <location>
        <begin position="106"/>
        <end position="127"/>
    </location>
</feature>
<feature type="topological domain" description="Cytoplasmic" evidence="1">
    <location>
        <begin position="128"/>
        <end position="130"/>
    </location>
</feature>
<feature type="transmembrane region" description="Helical; Name=Helix D" evidence="1">
    <location>
        <begin position="131"/>
        <end position="154"/>
    </location>
</feature>
<feature type="topological domain" description="Extracellular" evidence="1">
    <location>
        <begin position="155"/>
        <end position="157"/>
    </location>
</feature>
<feature type="transmembrane region" description="Helical; Name=Helix E" evidence="1">
    <location>
        <begin position="158"/>
        <end position="180"/>
    </location>
</feature>
<feature type="topological domain" description="Cytoplasmic" evidence="1">
    <location>
        <begin position="181"/>
        <end position="192"/>
    </location>
</feature>
<feature type="transmembrane region" description="Helical; Name=Helix F" evidence="1">
    <location>
        <begin position="193"/>
        <end position="216"/>
    </location>
</feature>
<feature type="topological domain" description="Extracellular" evidence="1">
    <location>
        <begin position="217"/>
        <end position="225"/>
    </location>
</feature>
<feature type="transmembrane region" description="Helical; Name=Helix G" evidence="1">
    <location>
        <begin position="226"/>
        <end position="254"/>
    </location>
</feature>
<feature type="topological domain" description="Cytoplasmic" evidence="1">
    <location>
        <begin position="255"/>
        <end position="276"/>
    </location>
</feature>
<feature type="modified residue" description="N6-(retinylidene)lysine" evidence="1">
    <location>
        <position position="241"/>
    </location>
</feature>